<accession>A0A7S8RFY1</accession>
<accession>A0A218QXD4</accession>
<dbReference type="EMBL" id="MT081342">
    <property type="protein sequence ID" value="QPD99024.1"/>
    <property type="molecule type" value="mRNA"/>
</dbReference>
<dbReference type="EMBL" id="GEUW01000032">
    <property type="protein sequence ID" value="JAW07013.1"/>
    <property type="molecule type" value="mRNA"/>
</dbReference>
<dbReference type="SMR" id="A0A7S8RFY1"/>
<dbReference type="GO" id="GO:0005576">
    <property type="term" value="C:extracellular region"/>
    <property type="evidence" value="ECO:0007669"/>
    <property type="project" value="UniProtKB-SubCell"/>
</dbReference>
<dbReference type="GO" id="GO:0019871">
    <property type="term" value="F:sodium channel inhibitor activity"/>
    <property type="evidence" value="ECO:0007669"/>
    <property type="project" value="InterPro"/>
</dbReference>
<dbReference type="GO" id="GO:0090729">
    <property type="term" value="F:toxin activity"/>
    <property type="evidence" value="ECO:0007669"/>
    <property type="project" value="UniProtKB-KW"/>
</dbReference>
<dbReference type="GO" id="GO:0006952">
    <property type="term" value="P:defense response"/>
    <property type="evidence" value="ECO:0007669"/>
    <property type="project" value="InterPro"/>
</dbReference>
<dbReference type="CDD" id="cd23106">
    <property type="entry name" value="neurotoxins_LC_scorpion"/>
    <property type="match status" value="1"/>
</dbReference>
<dbReference type="Gene3D" id="3.30.30.10">
    <property type="entry name" value="Knottin, scorpion toxin-like"/>
    <property type="match status" value="1"/>
</dbReference>
<dbReference type="InterPro" id="IPR044062">
    <property type="entry name" value="LCN-type_CS_alpha_beta_dom"/>
</dbReference>
<dbReference type="InterPro" id="IPR003614">
    <property type="entry name" value="Scorpion_toxin-like"/>
</dbReference>
<dbReference type="InterPro" id="IPR036574">
    <property type="entry name" value="Scorpion_toxin-like_sf"/>
</dbReference>
<dbReference type="InterPro" id="IPR018218">
    <property type="entry name" value="Scorpion_toxinL"/>
</dbReference>
<dbReference type="InterPro" id="IPR002061">
    <property type="entry name" value="Scorpion_toxinL/defensin"/>
</dbReference>
<dbReference type="Pfam" id="PF00537">
    <property type="entry name" value="Toxin_3"/>
    <property type="match status" value="1"/>
</dbReference>
<dbReference type="PRINTS" id="PR00285">
    <property type="entry name" value="SCORPNTOXIN"/>
</dbReference>
<dbReference type="SMART" id="SM00505">
    <property type="entry name" value="Knot1"/>
    <property type="match status" value="1"/>
</dbReference>
<dbReference type="SUPFAM" id="SSF57095">
    <property type="entry name" value="Scorpion toxin-like"/>
    <property type="match status" value="1"/>
</dbReference>
<dbReference type="PROSITE" id="PS51863">
    <property type="entry name" value="LCN_CSAB"/>
    <property type="match status" value="1"/>
</dbReference>
<comment type="subcellular location">
    <subcellularLocation>
        <location evidence="5 6">Secreted</location>
    </subcellularLocation>
</comment>
<comment type="tissue specificity">
    <text evidence="5 6">Expressed by the venom gland.</text>
</comment>
<comment type="domain">
    <text evidence="4">Has the structural arrangement of an alpha-helix connected to antiparallel beta-sheets by disulfide bonds (CS-alpha/beta).</text>
</comment>
<name>SCX30_TITSE</name>
<keyword id="KW-1015">Disulfide bond</keyword>
<keyword id="KW-0872">Ion channel impairing toxin</keyword>
<keyword id="KW-0528">Neurotoxin</keyword>
<keyword id="KW-0964">Secreted</keyword>
<keyword id="KW-0732">Signal</keyword>
<keyword id="KW-0800">Toxin</keyword>
<keyword id="KW-0738">Voltage-gated sodium channel impairing toxin</keyword>
<sequence length="89" mass="9934">MFKLAIILALLFFGARAGAVRDGYPILSDGCKYTCKPLGENQNCSRICKEKAGSWYGYCYMWACYCTDVSKKAVLFGDSGTPECHVWIK</sequence>
<protein>
    <recommendedName>
        <fullName evidence="3">Putative sodium channel toxin Ts30</fullName>
    </recommendedName>
    <alternativeName>
        <fullName evidence="3">Putative NaTx</fullName>
    </alternativeName>
    <alternativeName>
        <fullName evidence="4">Tityustoxin-30</fullName>
    </alternativeName>
</protein>
<feature type="signal peptide" evidence="1">
    <location>
        <begin position="1"/>
        <end position="17"/>
    </location>
</feature>
<feature type="chain" id="PRO_5031043448" description="Putative sodium channel toxin Ts30">
    <location>
        <begin position="18"/>
        <end position="89"/>
    </location>
</feature>
<feature type="domain" description="LCN-type CS-alpha/beta" evidence="2">
    <location>
        <begin position="21"/>
        <end position="85"/>
    </location>
</feature>
<feature type="disulfide bond" evidence="2">
    <location>
        <begin position="31"/>
        <end position="84"/>
    </location>
</feature>
<feature type="disulfide bond" evidence="2">
    <location>
        <begin position="35"/>
        <end position="59"/>
    </location>
</feature>
<feature type="disulfide bond" evidence="2">
    <location>
        <begin position="44"/>
        <end position="64"/>
    </location>
</feature>
<feature type="disulfide bond" evidence="2">
    <location>
        <begin position="48"/>
        <end position="66"/>
    </location>
</feature>
<reference evidence="8" key="1">
    <citation type="journal article" date="2021" name="Toxicon">
        <title>Novel components of Tityus serrulatus venom: a transcriptomic approach.</title>
        <authorList>
            <person name="Kalapothakis Y."/>
            <person name="Miranda K."/>
            <person name="Pereira A.H."/>
            <person name="Witt A.S.A."/>
            <person name="Marani C."/>
            <person name="Martins A.P."/>
            <person name="Leal H.G."/>
            <person name="Campos-Junior E."/>
            <person name="Pimenta A.M.C."/>
            <person name="Borges A."/>
            <person name="Chavez-Olortegui C."/>
            <person name="Kalapothakis E."/>
        </authorList>
    </citation>
    <scope>NUCLEOTIDE SEQUENCE [MRNA]</scope>
    <source>
        <tissue>Telson</tissue>
    </source>
</reference>
<reference evidence="7" key="2">
    <citation type="journal article" date="2018" name="PLoS ONE">
        <title>Proteomic endorsed transcriptomic profiles of venom glands from Tityus obscurus and T. serrulatus scorpions.</title>
        <authorList>
            <person name="de Oliveira U.C."/>
            <person name="Nishiyama M.Y. Jr."/>
            <person name="Dos Santos M.B.V."/>
            <person name="Santos-da-Silva A.P."/>
            <person name="Chalkidis H.M."/>
            <person name="Souza-Imberg A."/>
            <person name="Candido D.M."/>
            <person name="Yamanouye N."/>
            <person name="Dorce V.A.C."/>
            <person name="Junqueira-de-Azevedo I.L.M."/>
        </authorList>
    </citation>
    <scope>NUCLEOTIDE SEQUENCE [MRNA] OF 6-89</scope>
    <source>
        <tissue>Telson</tissue>
    </source>
</reference>
<organism>
    <name type="scientific">Tityus serrulatus</name>
    <name type="common">Brazilian scorpion</name>
    <dbReference type="NCBI Taxonomy" id="6887"/>
    <lineage>
        <taxon>Eukaryota</taxon>
        <taxon>Metazoa</taxon>
        <taxon>Ecdysozoa</taxon>
        <taxon>Arthropoda</taxon>
        <taxon>Chelicerata</taxon>
        <taxon>Arachnida</taxon>
        <taxon>Scorpiones</taxon>
        <taxon>Buthida</taxon>
        <taxon>Buthoidea</taxon>
        <taxon>Buthidae</taxon>
        <taxon>Tityus</taxon>
    </lineage>
</organism>
<evidence type="ECO:0000255" key="1"/>
<evidence type="ECO:0000255" key="2">
    <source>
        <dbReference type="PROSITE-ProRule" id="PRU01210"/>
    </source>
</evidence>
<evidence type="ECO:0000303" key="3">
    <source>
    </source>
</evidence>
<evidence type="ECO:0000305" key="4"/>
<evidence type="ECO:0000305" key="5">
    <source>
    </source>
</evidence>
<evidence type="ECO:0000305" key="6">
    <source>
    </source>
</evidence>
<evidence type="ECO:0000312" key="7">
    <source>
        <dbReference type="EMBL" id="JAW07013.1"/>
    </source>
</evidence>
<evidence type="ECO:0000312" key="8">
    <source>
        <dbReference type="EMBL" id="QPD99024.1"/>
    </source>
</evidence>
<proteinExistence type="inferred from homology"/>